<proteinExistence type="inferred from homology"/>
<name>LEPA_STRSY</name>
<feature type="chain" id="PRO_1000032062" description="Elongation factor 4">
    <location>
        <begin position="1"/>
        <end position="610"/>
    </location>
</feature>
<feature type="domain" description="tr-type G">
    <location>
        <begin position="11"/>
        <end position="193"/>
    </location>
</feature>
<feature type="binding site" evidence="1">
    <location>
        <begin position="23"/>
        <end position="28"/>
    </location>
    <ligand>
        <name>GTP</name>
        <dbReference type="ChEBI" id="CHEBI:37565"/>
    </ligand>
</feature>
<feature type="binding site" evidence="1">
    <location>
        <begin position="140"/>
        <end position="143"/>
    </location>
    <ligand>
        <name>GTP</name>
        <dbReference type="ChEBI" id="CHEBI:37565"/>
    </ligand>
</feature>
<comment type="function">
    <text evidence="1">Required for accurate and efficient protein synthesis under certain stress conditions. May act as a fidelity factor of the translation reaction, by catalyzing a one-codon backward translocation of tRNAs on improperly translocated ribosomes. Back-translocation proceeds from a post-translocation (POST) complex to a pre-translocation (PRE) complex, thus giving elongation factor G a second chance to translocate the tRNAs correctly. Binds to ribosomes in a GTP-dependent manner.</text>
</comment>
<comment type="catalytic activity">
    <reaction evidence="1">
        <text>GTP + H2O = GDP + phosphate + H(+)</text>
        <dbReference type="Rhea" id="RHEA:19669"/>
        <dbReference type="ChEBI" id="CHEBI:15377"/>
        <dbReference type="ChEBI" id="CHEBI:15378"/>
        <dbReference type="ChEBI" id="CHEBI:37565"/>
        <dbReference type="ChEBI" id="CHEBI:43474"/>
        <dbReference type="ChEBI" id="CHEBI:58189"/>
        <dbReference type="EC" id="3.6.5.n1"/>
    </reaction>
</comment>
<comment type="subcellular location">
    <subcellularLocation>
        <location evidence="1">Cell membrane</location>
        <topology evidence="1">Peripheral membrane protein</topology>
        <orientation evidence="1">Cytoplasmic side</orientation>
    </subcellularLocation>
</comment>
<comment type="similarity">
    <text evidence="1">Belongs to the TRAFAC class translation factor GTPase superfamily. Classic translation factor GTPase family. LepA subfamily.</text>
</comment>
<dbReference type="EC" id="3.6.5.n1" evidence="1"/>
<dbReference type="EMBL" id="CP000407">
    <property type="protein sequence ID" value="ABP89807.1"/>
    <property type="molecule type" value="Genomic_DNA"/>
</dbReference>
<dbReference type="SMR" id="A4VUL8"/>
<dbReference type="STRING" id="391295.SSU05_0841"/>
<dbReference type="KEGG" id="ssu:SSU05_0841"/>
<dbReference type="eggNOG" id="COG0481">
    <property type="taxonomic scope" value="Bacteria"/>
</dbReference>
<dbReference type="HOGENOM" id="CLU_009995_3_3_9"/>
<dbReference type="GO" id="GO:0005886">
    <property type="term" value="C:plasma membrane"/>
    <property type="evidence" value="ECO:0007669"/>
    <property type="project" value="UniProtKB-SubCell"/>
</dbReference>
<dbReference type="GO" id="GO:0005525">
    <property type="term" value="F:GTP binding"/>
    <property type="evidence" value="ECO:0007669"/>
    <property type="project" value="UniProtKB-UniRule"/>
</dbReference>
<dbReference type="GO" id="GO:0003924">
    <property type="term" value="F:GTPase activity"/>
    <property type="evidence" value="ECO:0007669"/>
    <property type="project" value="UniProtKB-UniRule"/>
</dbReference>
<dbReference type="GO" id="GO:0043022">
    <property type="term" value="F:ribosome binding"/>
    <property type="evidence" value="ECO:0007669"/>
    <property type="project" value="UniProtKB-UniRule"/>
</dbReference>
<dbReference type="GO" id="GO:0003746">
    <property type="term" value="F:translation elongation factor activity"/>
    <property type="evidence" value="ECO:0007669"/>
    <property type="project" value="UniProtKB-UniRule"/>
</dbReference>
<dbReference type="GO" id="GO:0045727">
    <property type="term" value="P:positive regulation of translation"/>
    <property type="evidence" value="ECO:0007669"/>
    <property type="project" value="UniProtKB-UniRule"/>
</dbReference>
<dbReference type="CDD" id="cd03699">
    <property type="entry name" value="EF4_II"/>
    <property type="match status" value="1"/>
</dbReference>
<dbReference type="CDD" id="cd16260">
    <property type="entry name" value="EF4_III"/>
    <property type="match status" value="1"/>
</dbReference>
<dbReference type="CDD" id="cd01890">
    <property type="entry name" value="LepA"/>
    <property type="match status" value="1"/>
</dbReference>
<dbReference type="CDD" id="cd03709">
    <property type="entry name" value="lepA_C"/>
    <property type="match status" value="1"/>
</dbReference>
<dbReference type="FunFam" id="3.40.50.300:FF:000078">
    <property type="entry name" value="Elongation factor 4"/>
    <property type="match status" value="1"/>
</dbReference>
<dbReference type="FunFam" id="2.40.30.10:FF:000015">
    <property type="entry name" value="Translation factor GUF1, mitochondrial"/>
    <property type="match status" value="1"/>
</dbReference>
<dbReference type="FunFam" id="3.30.70.240:FF:000007">
    <property type="entry name" value="Translation factor GUF1, mitochondrial"/>
    <property type="match status" value="1"/>
</dbReference>
<dbReference type="FunFam" id="3.30.70.2570:FF:000001">
    <property type="entry name" value="Translation factor GUF1, mitochondrial"/>
    <property type="match status" value="1"/>
</dbReference>
<dbReference type="FunFam" id="3.30.70.870:FF:000004">
    <property type="entry name" value="Translation factor GUF1, mitochondrial"/>
    <property type="match status" value="1"/>
</dbReference>
<dbReference type="Gene3D" id="3.30.70.240">
    <property type="match status" value="1"/>
</dbReference>
<dbReference type="Gene3D" id="3.30.70.2570">
    <property type="entry name" value="Elongation factor 4, C-terminal domain"/>
    <property type="match status" value="1"/>
</dbReference>
<dbReference type="Gene3D" id="3.30.70.870">
    <property type="entry name" value="Elongation Factor G (Translational Gtpase), domain 3"/>
    <property type="match status" value="1"/>
</dbReference>
<dbReference type="Gene3D" id="3.40.50.300">
    <property type="entry name" value="P-loop containing nucleotide triphosphate hydrolases"/>
    <property type="match status" value="1"/>
</dbReference>
<dbReference type="Gene3D" id="2.40.30.10">
    <property type="entry name" value="Translation factors"/>
    <property type="match status" value="1"/>
</dbReference>
<dbReference type="HAMAP" id="MF_00071">
    <property type="entry name" value="LepA"/>
    <property type="match status" value="1"/>
</dbReference>
<dbReference type="InterPro" id="IPR006297">
    <property type="entry name" value="EF-4"/>
</dbReference>
<dbReference type="InterPro" id="IPR041095">
    <property type="entry name" value="EFG_II"/>
</dbReference>
<dbReference type="InterPro" id="IPR035647">
    <property type="entry name" value="EFG_III/V"/>
</dbReference>
<dbReference type="InterPro" id="IPR000640">
    <property type="entry name" value="EFG_V-like"/>
</dbReference>
<dbReference type="InterPro" id="IPR004161">
    <property type="entry name" value="EFTu-like_2"/>
</dbReference>
<dbReference type="InterPro" id="IPR031157">
    <property type="entry name" value="G_TR_CS"/>
</dbReference>
<dbReference type="InterPro" id="IPR038363">
    <property type="entry name" value="LepA_C_sf"/>
</dbReference>
<dbReference type="InterPro" id="IPR013842">
    <property type="entry name" value="LepA_CTD"/>
</dbReference>
<dbReference type="InterPro" id="IPR035654">
    <property type="entry name" value="LepA_IV"/>
</dbReference>
<dbReference type="InterPro" id="IPR027417">
    <property type="entry name" value="P-loop_NTPase"/>
</dbReference>
<dbReference type="InterPro" id="IPR005225">
    <property type="entry name" value="Small_GTP-bd"/>
</dbReference>
<dbReference type="InterPro" id="IPR000795">
    <property type="entry name" value="T_Tr_GTP-bd_dom"/>
</dbReference>
<dbReference type="InterPro" id="IPR009000">
    <property type="entry name" value="Transl_B-barrel_sf"/>
</dbReference>
<dbReference type="NCBIfam" id="TIGR01393">
    <property type="entry name" value="lepA"/>
    <property type="match status" value="1"/>
</dbReference>
<dbReference type="NCBIfam" id="TIGR00231">
    <property type="entry name" value="small_GTP"/>
    <property type="match status" value="1"/>
</dbReference>
<dbReference type="PANTHER" id="PTHR43512:SF4">
    <property type="entry name" value="TRANSLATION FACTOR GUF1 HOMOLOG, CHLOROPLASTIC"/>
    <property type="match status" value="1"/>
</dbReference>
<dbReference type="PANTHER" id="PTHR43512">
    <property type="entry name" value="TRANSLATION FACTOR GUF1-RELATED"/>
    <property type="match status" value="1"/>
</dbReference>
<dbReference type="Pfam" id="PF00679">
    <property type="entry name" value="EFG_C"/>
    <property type="match status" value="1"/>
</dbReference>
<dbReference type="Pfam" id="PF14492">
    <property type="entry name" value="EFG_III"/>
    <property type="match status" value="1"/>
</dbReference>
<dbReference type="Pfam" id="PF00009">
    <property type="entry name" value="GTP_EFTU"/>
    <property type="match status" value="1"/>
</dbReference>
<dbReference type="Pfam" id="PF03144">
    <property type="entry name" value="GTP_EFTU_D2"/>
    <property type="match status" value="1"/>
</dbReference>
<dbReference type="Pfam" id="PF06421">
    <property type="entry name" value="LepA_C"/>
    <property type="match status" value="1"/>
</dbReference>
<dbReference type="PRINTS" id="PR00315">
    <property type="entry name" value="ELONGATNFCT"/>
</dbReference>
<dbReference type="SMART" id="SM00838">
    <property type="entry name" value="EFG_C"/>
    <property type="match status" value="1"/>
</dbReference>
<dbReference type="SUPFAM" id="SSF54980">
    <property type="entry name" value="EF-G C-terminal domain-like"/>
    <property type="match status" value="2"/>
</dbReference>
<dbReference type="SUPFAM" id="SSF52540">
    <property type="entry name" value="P-loop containing nucleoside triphosphate hydrolases"/>
    <property type="match status" value="1"/>
</dbReference>
<dbReference type="SUPFAM" id="SSF50447">
    <property type="entry name" value="Translation proteins"/>
    <property type="match status" value="1"/>
</dbReference>
<dbReference type="PROSITE" id="PS00301">
    <property type="entry name" value="G_TR_1"/>
    <property type="match status" value="1"/>
</dbReference>
<dbReference type="PROSITE" id="PS51722">
    <property type="entry name" value="G_TR_2"/>
    <property type="match status" value="1"/>
</dbReference>
<protein>
    <recommendedName>
        <fullName evidence="1">Elongation factor 4</fullName>
        <shortName evidence="1">EF-4</shortName>
        <ecNumber evidence="1">3.6.5.n1</ecNumber>
    </recommendedName>
    <alternativeName>
        <fullName evidence="1">Ribosomal back-translocase LepA</fullName>
    </alternativeName>
</protein>
<evidence type="ECO:0000255" key="1">
    <source>
        <dbReference type="HAMAP-Rule" id="MF_00071"/>
    </source>
</evidence>
<keyword id="KW-1003">Cell membrane</keyword>
<keyword id="KW-0342">GTP-binding</keyword>
<keyword id="KW-0378">Hydrolase</keyword>
<keyword id="KW-0472">Membrane</keyword>
<keyword id="KW-0547">Nucleotide-binding</keyword>
<keyword id="KW-0648">Protein biosynthesis</keyword>
<sequence length="610" mass="68014">MNLEDLKKRQEKIRNFSIIAHIDHGKSTLADRILEKTETVSSREMQAQLLDSMDLERERGITIKLNAIELNYTAKDGETYIFHLIDTPGHVDFTYEVSRSLAACEGAILVVDAAQGIEAQTLANVYLALDNDLEILPIINKIDLPAADPERVRQEIEDVIGLDASEAVPTSAKAGIGIEEILEQIVEKVPAPTGDVEAPLQALIFDSVYDPYRGVILQVRIVNGVVKPGDTIQMMSNGKTFDVTEVGIFTPKAIGRDYLATGDVGYIAASIKTVADTRVGDTVTLAENPASEPLAGYKQMNPMVFAGIYPIDSNKYNDLREALEKLQLNDASLQFEPETSQALGFGFRCGFLGLLHMDVIQERIEREFNIDLIMTAPSVVYHVNMTDGEMIDVANPSEFPDPTKIATIEEPYVKAQIMVPQEYVGAVMELAQRKRGDFVTMDYIDDNRVNVIYQIPLAEIVFDFFDKLKSSTRGYASFDYEISEYRSSKLVKMDILLNGDKVDALSFIVHKEFAYERGKIIVDKLKKIIPRQQFEVPIQAAIGQKIVARSDIKALRKNVLAKCYGGDVSRKRKLLEKQKAGKKRMKAIGSVEVPQEAFLSVLSMDEDDKK</sequence>
<gene>
    <name evidence="1" type="primary">lepA</name>
    <name type="ordered locus">SSU05_0841</name>
</gene>
<reference key="1">
    <citation type="journal article" date="2007" name="PLoS ONE">
        <title>A glimpse of streptococcal toxic shock syndrome from comparative genomics of S. suis 2 Chinese isolates.</title>
        <authorList>
            <person name="Chen C."/>
            <person name="Tang J."/>
            <person name="Dong W."/>
            <person name="Wang C."/>
            <person name="Feng Y."/>
            <person name="Wang J."/>
            <person name="Zheng F."/>
            <person name="Pan X."/>
            <person name="Liu D."/>
            <person name="Li M."/>
            <person name="Song Y."/>
            <person name="Zhu X."/>
            <person name="Sun H."/>
            <person name="Feng T."/>
            <person name="Guo Z."/>
            <person name="Ju A."/>
            <person name="Ge J."/>
            <person name="Dong Y."/>
            <person name="Sun W."/>
            <person name="Jiang Y."/>
            <person name="Wang J."/>
            <person name="Yan J."/>
            <person name="Yang H."/>
            <person name="Wang X."/>
            <person name="Gao G.F."/>
            <person name="Yang R."/>
            <person name="Wang J."/>
            <person name="Yu J."/>
        </authorList>
    </citation>
    <scope>NUCLEOTIDE SEQUENCE [LARGE SCALE GENOMIC DNA]</scope>
    <source>
        <strain>05ZYH33</strain>
    </source>
</reference>
<accession>A4VUL8</accession>
<organism>
    <name type="scientific">Streptococcus suis (strain 05ZYH33)</name>
    <dbReference type="NCBI Taxonomy" id="391295"/>
    <lineage>
        <taxon>Bacteria</taxon>
        <taxon>Bacillati</taxon>
        <taxon>Bacillota</taxon>
        <taxon>Bacilli</taxon>
        <taxon>Lactobacillales</taxon>
        <taxon>Streptococcaceae</taxon>
        <taxon>Streptococcus</taxon>
    </lineage>
</organism>